<feature type="chain" id="PRO_0000080130" description="Bifunctional protein HldE">
    <location>
        <begin position="1"/>
        <end position="476"/>
    </location>
</feature>
<feature type="region of interest" description="Ribokinase">
    <location>
        <begin position="1"/>
        <end position="318"/>
    </location>
</feature>
<feature type="region of interest" description="Cytidylyltransferase">
    <location>
        <begin position="344"/>
        <end position="476"/>
    </location>
</feature>
<feature type="active site" evidence="1">
    <location>
        <position position="264"/>
    </location>
</feature>
<feature type="binding site" evidence="1">
    <location>
        <begin position="195"/>
        <end position="198"/>
    </location>
    <ligand>
        <name>ATP</name>
        <dbReference type="ChEBI" id="CHEBI:30616"/>
    </ligand>
</feature>
<accession>Q8DEH7</accession>
<evidence type="ECO:0000255" key="1">
    <source>
        <dbReference type="HAMAP-Rule" id="MF_01603"/>
    </source>
</evidence>
<reference key="1">
    <citation type="submission" date="2002-12" db="EMBL/GenBank/DDBJ databases">
        <title>Complete genome sequence of Vibrio vulnificus CMCP6.</title>
        <authorList>
            <person name="Rhee J.H."/>
            <person name="Kim S.Y."/>
            <person name="Chung S.S."/>
            <person name="Kim J.J."/>
            <person name="Moon Y.H."/>
            <person name="Jeong H."/>
            <person name="Choy H.E."/>
        </authorList>
    </citation>
    <scope>NUCLEOTIDE SEQUENCE [LARGE SCALE GENOMIC DNA]</scope>
    <source>
        <strain>CMCP6</strain>
    </source>
</reference>
<gene>
    <name evidence="1" type="primary">hldE</name>
    <name type="synonym">rfaE</name>
    <name type="ordered locus">VV1_0613</name>
</gene>
<proteinExistence type="inferred from homology"/>
<keyword id="KW-0067">ATP-binding</keyword>
<keyword id="KW-0119">Carbohydrate metabolism</keyword>
<keyword id="KW-0418">Kinase</keyword>
<keyword id="KW-0448">Lipopolysaccharide biosynthesis</keyword>
<keyword id="KW-0511">Multifunctional enzyme</keyword>
<keyword id="KW-0547">Nucleotide-binding</keyword>
<keyword id="KW-0548">Nucleotidyltransferase</keyword>
<keyword id="KW-0808">Transferase</keyword>
<dbReference type="EC" id="2.7.1.167" evidence="1"/>
<dbReference type="EC" id="2.7.7.70" evidence="1"/>
<dbReference type="EMBL" id="AE016795">
    <property type="protein sequence ID" value="AAO09127.1"/>
    <property type="molecule type" value="Genomic_DNA"/>
</dbReference>
<dbReference type="RefSeq" id="WP_011078696.1">
    <property type="nucleotide sequence ID" value="NC_004459.3"/>
</dbReference>
<dbReference type="SMR" id="Q8DEH7"/>
<dbReference type="GeneID" id="93894923"/>
<dbReference type="KEGG" id="vvu:VV1_0613"/>
<dbReference type="HOGENOM" id="CLU_021150_2_1_6"/>
<dbReference type="UniPathway" id="UPA00356">
    <property type="reaction ID" value="UER00437"/>
</dbReference>
<dbReference type="UniPathway" id="UPA00356">
    <property type="reaction ID" value="UER00439"/>
</dbReference>
<dbReference type="UniPathway" id="UPA00958"/>
<dbReference type="Proteomes" id="UP000002275">
    <property type="component" value="Chromosome 1"/>
</dbReference>
<dbReference type="GO" id="GO:0005829">
    <property type="term" value="C:cytosol"/>
    <property type="evidence" value="ECO:0007669"/>
    <property type="project" value="TreeGrafter"/>
</dbReference>
<dbReference type="GO" id="GO:0005524">
    <property type="term" value="F:ATP binding"/>
    <property type="evidence" value="ECO:0007669"/>
    <property type="project" value="UniProtKB-UniRule"/>
</dbReference>
<dbReference type="GO" id="GO:0033785">
    <property type="term" value="F:heptose 7-phosphate kinase activity"/>
    <property type="evidence" value="ECO:0007669"/>
    <property type="project" value="UniProtKB-UniRule"/>
</dbReference>
<dbReference type="GO" id="GO:0033786">
    <property type="term" value="F:heptose-1-phosphate adenylyltransferase activity"/>
    <property type="evidence" value="ECO:0007669"/>
    <property type="project" value="UniProtKB-UniRule"/>
</dbReference>
<dbReference type="GO" id="GO:0016773">
    <property type="term" value="F:phosphotransferase activity, alcohol group as acceptor"/>
    <property type="evidence" value="ECO:0007669"/>
    <property type="project" value="InterPro"/>
</dbReference>
<dbReference type="GO" id="GO:0097171">
    <property type="term" value="P:ADP-L-glycero-beta-D-manno-heptose biosynthetic process"/>
    <property type="evidence" value="ECO:0007669"/>
    <property type="project" value="UniProtKB-UniPathway"/>
</dbReference>
<dbReference type="GO" id="GO:0009244">
    <property type="term" value="P:lipopolysaccharide core region biosynthetic process"/>
    <property type="evidence" value="ECO:0007669"/>
    <property type="project" value="UniProtKB-UniPathway"/>
</dbReference>
<dbReference type="CDD" id="cd01172">
    <property type="entry name" value="RfaE_like"/>
    <property type="match status" value="1"/>
</dbReference>
<dbReference type="FunFam" id="3.40.1190.20:FF:000002">
    <property type="entry name" value="Bifunctional protein HldE"/>
    <property type="match status" value="1"/>
</dbReference>
<dbReference type="FunFam" id="3.40.50.620:FF:000028">
    <property type="entry name" value="Bifunctional protein HldE"/>
    <property type="match status" value="1"/>
</dbReference>
<dbReference type="Gene3D" id="3.40.1190.20">
    <property type="match status" value="1"/>
</dbReference>
<dbReference type="Gene3D" id="3.40.50.620">
    <property type="entry name" value="HUPs"/>
    <property type="match status" value="1"/>
</dbReference>
<dbReference type="HAMAP" id="MF_01603">
    <property type="entry name" value="HldE"/>
    <property type="match status" value="1"/>
</dbReference>
<dbReference type="InterPro" id="IPR023030">
    <property type="entry name" value="Bifunc_HldE"/>
</dbReference>
<dbReference type="InterPro" id="IPR002173">
    <property type="entry name" value="Carboh/pur_kinase_PfkB_CS"/>
</dbReference>
<dbReference type="InterPro" id="IPR004821">
    <property type="entry name" value="Cyt_trans-like"/>
</dbReference>
<dbReference type="InterPro" id="IPR011611">
    <property type="entry name" value="PfkB_dom"/>
</dbReference>
<dbReference type="InterPro" id="IPR011913">
    <property type="entry name" value="RfaE_dom_I"/>
</dbReference>
<dbReference type="InterPro" id="IPR011914">
    <property type="entry name" value="RfaE_dom_II"/>
</dbReference>
<dbReference type="InterPro" id="IPR029056">
    <property type="entry name" value="Ribokinase-like"/>
</dbReference>
<dbReference type="InterPro" id="IPR014729">
    <property type="entry name" value="Rossmann-like_a/b/a_fold"/>
</dbReference>
<dbReference type="NCBIfam" id="TIGR00125">
    <property type="entry name" value="cyt_tran_rel"/>
    <property type="match status" value="1"/>
</dbReference>
<dbReference type="NCBIfam" id="NF008454">
    <property type="entry name" value="PRK11316.1"/>
    <property type="match status" value="1"/>
</dbReference>
<dbReference type="NCBIfam" id="TIGR02198">
    <property type="entry name" value="rfaE_dom_I"/>
    <property type="match status" value="1"/>
</dbReference>
<dbReference type="NCBIfam" id="TIGR02199">
    <property type="entry name" value="rfaE_dom_II"/>
    <property type="match status" value="1"/>
</dbReference>
<dbReference type="PANTHER" id="PTHR46969">
    <property type="entry name" value="BIFUNCTIONAL PROTEIN HLDE"/>
    <property type="match status" value="1"/>
</dbReference>
<dbReference type="PANTHER" id="PTHR46969:SF1">
    <property type="entry name" value="BIFUNCTIONAL PROTEIN HLDE"/>
    <property type="match status" value="1"/>
</dbReference>
<dbReference type="Pfam" id="PF01467">
    <property type="entry name" value="CTP_transf_like"/>
    <property type="match status" value="1"/>
</dbReference>
<dbReference type="Pfam" id="PF00294">
    <property type="entry name" value="PfkB"/>
    <property type="match status" value="1"/>
</dbReference>
<dbReference type="SUPFAM" id="SSF52374">
    <property type="entry name" value="Nucleotidylyl transferase"/>
    <property type="match status" value="1"/>
</dbReference>
<dbReference type="SUPFAM" id="SSF53613">
    <property type="entry name" value="Ribokinase-like"/>
    <property type="match status" value="1"/>
</dbReference>
<dbReference type="PROSITE" id="PS00583">
    <property type="entry name" value="PFKB_KINASES_1"/>
    <property type="match status" value="1"/>
</dbReference>
<protein>
    <recommendedName>
        <fullName evidence="1">Bifunctional protein HldE</fullName>
    </recommendedName>
    <domain>
        <recommendedName>
            <fullName evidence="1">D-beta-D-heptose 7-phosphate kinase</fullName>
            <ecNumber evidence="1">2.7.1.167</ecNumber>
        </recommendedName>
        <alternativeName>
            <fullName evidence="1">D-beta-D-heptose 7-phosphotransferase</fullName>
        </alternativeName>
        <alternativeName>
            <fullName evidence="1">D-glycero-beta-D-manno-heptose-7-phosphate kinase</fullName>
        </alternativeName>
    </domain>
    <domain>
        <recommendedName>
            <fullName evidence="1">D-beta-D-heptose 1-phosphate adenylyltransferase</fullName>
            <ecNumber evidence="1">2.7.7.70</ecNumber>
        </recommendedName>
        <alternativeName>
            <fullName evidence="1">D-glycero-beta-D-manno-heptose 1-phosphate adenylyltransferase</fullName>
        </alternativeName>
    </domain>
</protein>
<sequence length="476" mass="50569">MKPILPDYNNAGVLIIGDVMLDRYWYGPTSRISPEAPVPVVKVENNEERPGGAANVAMNIASLGGHARIVGLTGMDEPAKVLTETLNSLKVKCDFVALPEYPTITKLRVMSRGQQLIRLDFEDKFEGTDPELVLTRMERALPHVQAVILSDYAKGALEHVEALIAKARAANVPVFIDPKGTNFEPYRGATLLTPNMSEFEAVVGKVTSDDDLVEKALGLIEKFELGALLVTRSEHGMTLVRPDQKPFHLPTQAKEVYDVTGAGDTVISVLAASVAAGKPLDEACALANAAAGVVVGKLGTSTLSTIELAEAIHGSRDTDFGVIAEAALIDAVKAAQAKGEKVVMTNGCFDILHAGHVSYLNNAAKLGDRLIVAVNTDESVKRLKGPGRPVNPTDRRMAVLAGLGAVDWVVPFSEDTPQRLISEVLPDLLVKGGDYKPEDIAGGKEVIAAGGEVKVLNFEDGCSTTEIIDAIKGGRG</sequence>
<name>HLDE_VIBVU</name>
<comment type="function">
    <text evidence="1">Catalyzes the phosphorylation of D-glycero-D-manno-heptose 7-phosphate at the C-1 position to selectively form D-glycero-beta-D-manno-heptose-1,7-bisphosphate.</text>
</comment>
<comment type="function">
    <text evidence="1">Catalyzes the ADP transfer from ATP to D-glycero-beta-D-manno-heptose 1-phosphate, yielding ADP-D-glycero-beta-D-manno-heptose.</text>
</comment>
<comment type="catalytic activity">
    <reaction evidence="1">
        <text>D-glycero-beta-D-manno-heptose 7-phosphate + ATP = D-glycero-beta-D-manno-heptose 1,7-bisphosphate + ADP + H(+)</text>
        <dbReference type="Rhea" id="RHEA:27473"/>
        <dbReference type="ChEBI" id="CHEBI:15378"/>
        <dbReference type="ChEBI" id="CHEBI:30616"/>
        <dbReference type="ChEBI" id="CHEBI:60204"/>
        <dbReference type="ChEBI" id="CHEBI:60208"/>
        <dbReference type="ChEBI" id="CHEBI:456216"/>
        <dbReference type="EC" id="2.7.1.167"/>
    </reaction>
</comment>
<comment type="catalytic activity">
    <reaction evidence="1">
        <text>D-glycero-beta-D-manno-heptose 1-phosphate + ATP + H(+) = ADP-D-glycero-beta-D-manno-heptose + diphosphate</text>
        <dbReference type="Rhea" id="RHEA:27465"/>
        <dbReference type="ChEBI" id="CHEBI:15378"/>
        <dbReference type="ChEBI" id="CHEBI:30616"/>
        <dbReference type="ChEBI" id="CHEBI:33019"/>
        <dbReference type="ChEBI" id="CHEBI:59967"/>
        <dbReference type="ChEBI" id="CHEBI:61593"/>
        <dbReference type="EC" id="2.7.7.70"/>
    </reaction>
</comment>
<comment type="pathway">
    <text evidence="1">Nucleotide-sugar biosynthesis; ADP-L-glycero-beta-D-manno-heptose biosynthesis; ADP-L-glycero-beta-D-manno-heptose from D-glycero-beta-D-manno-heptose 7-phosphate: step 1/4.</text>
</comment>
<comment type="pathway">
    <text evidence="1">Nucleotide-sugar biosynthesis; ADP-L-glycero-beta-D-manno-heptose biosynthesis; ADP-L-glycero-beta-D-manno-heptose from D-glycero-beta-D-manno-heptose 7-phosphate: step 3/4.</text>
</comment>
<comment type="pathway">
    <text>Bacterial outer membrane biogenesis; LPS core biosynthesis.</text>
</comment>
<comment type="subunit">
    <text evidence="1">Homodimer.</text>
</comment>
<comment type="similarity">
    <text evidence="1">In the N-terminal section; belongs to the carbohydrate kinase PfkB family.</text>
</comment>
<comment type="similarity">
    <text evidence="1">In the C-terminal section; belongs to the cytidylyltransferase family.</text>
</comment>
<organism>
    <name type="scientific">Vibrio vulnificus (strain CMCP6)</name>
    <dbReference type="NCBI Taxonomy" id="216895"/>
    <lineage>
        <taxon>Bacteria</taxon>
        <taxon>Pseudomonadati</taxon>
        <taxon>Pseudomonadota</taxon>
        <taxon>Gammaproteobacteria</taxon>
        <taxon>Vibrionales</taxon>
        <taxon>Vibrionaceae</taxon>
        <taxon>Vibrio</taxon>
    </lineage>
</organism>